<accession>Q8Y8N0</accession>
<keyword id="KW-0067">ATP-binding</keyword>
<keyword id="KW-0963">Cytoplasm</keyword>
<keyword id="KW-0347">Helicase</keyword>
<keyword id="KW-0378">Hydrolase</keyword>
<keyword id="KW-0547">Nucleotide-binding</keyword>
<keyword id="KW-1185">Reference proteome</keyword>
<keyword id="KW-0694">RNA-binding</keyword>
<keyword id="KW-0346">Stress response</keyword>
<organism>
    <name type="scientific">Listeria monocytogenes serovar 1/2a (strain ATCC BAA-679 / EGD-e)</name>
    <dbReference type="NCBI Taxonomy" id="169963"/>
    <lineage>
        <taxon>Bacteria</taxon>
        <taxon>Bacillati</taxon>
        <taxon>Bacillota</taxon>
        <taxon>Bacilli</taxon>
        <taxon>Bacillales</taxon>
        <taxon>Listeriaceae</taxon>
        <taxon>Listeria</taxon>
    </lineage>
</organism>
<reference key="1">
    <citation type="journal article" date="2001" name="Science">
        <title>Comparative genomics of Listeria species.</title>
        <authorList>
            <person name="Glaser P."/>
            <person name="Frangeul L."/>
            <person name="Buchrieser C."/>
            <person name="Rusniok C."/>
            <person name="Amend A."/>
            <person name="Baquero F."/>
            <person name="Berche P."/>
            <person name="Bloecker H."/>
            <person name="Brandt P."/>
            <person name="Chakraborty T."/>
            <person name="Charbit A."/>
            <person name="Chetouani F."/>
            <person name="Couve E."/>
            <person name="de Daruvar A."/>
            <person name="Dehoux P."/>
            <person name="Domann E."/>
            <person name="Dominguez-Bernal G."/>
            <person name="Duchaud E."/>
            <person name="Durant L."/>
            <person name="Dussurget O."/>
            <person name="Entian K.-D."/>
            <person name="Fsihi H."/>
            <person name="Garcia-del Portillo F."/>
            <person name="Garrido P."/>
            <person name="Gautier L."/>
            <person name="Goebel W."/>
            <person name="Gomez-Lopez N."/>
            <person name="Hain T."/>
            <person name="Hauf J."/>
            <person name="Jackson D."/>
            <person name="Jones L.-M."/>
            <person name="Kaerst U."/>
            <person name="Kreft J."/>
            <person name="Kuhn M."/>
            <person name="Kunst F."/>
            <person name="Kurapkat G."/>
            <person name="Madueno E."/>
            <person name="Maitournam A."/>
            <person name="Mata Vicente J."/>
            <person name="Ng E."/>
            <person name="Nedjari H."/>
            <person name="Nordsiek G."/>
            <person name="Novella S."/>
            <person name="de Pablos B."/>
            <person name="Perez-Diaz J.-C."/>
            <person name="Purcell R."/>
            <person name="Remmel B."/>
            <person name="Rose M."/>
            <person name="Schlueter T."/>
            <person name="Simoes N."/>
            <person name="Tierrez A."/>
            <person name="Vazquez-Boland J.-A."/>
            <person name="Voss H."/>
            <person name="Wehland J."/>
            <person name="Cossart P."/>
        </authorList>
    </citation>
    <scope>NUCLEOTIDE SEQUENCE [LARGE SCALE GENOMIC DNA]</scope>
    <source>
        <strain>ATCC BAA-679 / EGD-e</strain>
    </source>
</reference>
<reference key="2">
    <citation type="journal article" date="2012" name="Appl. Environ. Microbiol.">
        <title>Roles of four putative DEAD-box RNA helicase genes in growth of Listeria monocytogenes EGD-e under heat, pH, osmotic, ethanol, and oxidative stress conditions.</title>
        <authorList>
            <person name="Markkula A."/>
            <person name="Lindstrom M."/>
            <person name="Johansson P."/>
            <person name="Bjorkroth J."/>
            <person name="Korkeala H."/>
        </authorList>
    </citation>
    <scope>FUNCTION</scope>
    <scope>INDUCTION</scope>
    <scope>DISRUPTION PHENOTYPE</scope>
    <source>
        <strain>ATCC BAA-679 / EGD-e</strain>
    </source>
</reference>
<reference key="3">
    <citation type="journal article" date="2012" name="Environ. Microbiol.">
        <title>Genes encoding putative DEAD-box RNA helicases in Listeria monocytogenes EGD-e are needed for growth and motility at 3 degrees C.</title>
        <authorList>
            <person name="Markkula A."/>
            <person name="Mattila M."/>
            <person name="Lindstrom M."/>
            <person name="Korkeala H."/>
        </authorList>
    </citation>
    <scope>FUNCTION</scope>
    <scope>INDUCTION</scope>
    <scope>DISRUPTION PHENOTYPE</scope>
    <source>
        <strain>ATCC BAA-679 / EGD-e</strain>
    </source>
</reference>
<protein>
    <recommendedName>
        <fullName>ATP-dependent RNA helicase CshA</fullName>
        <ecNumber evidence="1">3.6.4.13</ecNumber>
    </recommendedName>
</protein>
<proteinExistence type="evidence at transcript level"/>
<dbReference type="EC" id="3.6.4.13" evidence="1"/>
<dbReference type="EMBL" id="AL591977">
    <property type="protein sequence ID" value="CAC98944.1"/>
    <property type="molecule type" value="Genomic_DNA"/>
</dbReference>
<dbReference type="PIR" id="AB1183">
    <property type="entry name" value="AB1183"/>
</dbReference>
<dbReference type="RefSeq" id="NP_464392.1">
    <property type="nucleotide sequence ID" value="NC_003210.1"/>
</dbReference>
<dbReference type="RefSeq" id="WP_003732374.1">
    <property type="nucleotide sequence ID" value="NZ_CP149495.1"/>
</dbReference>
<dbReference type="SMR" id="Q8Y8N0"/>
<dbReference type="STRING" id="169963.gene:17593517"/>
<dbReference type="PaxDb" id="169963-lmo0866"/>
<dbReference type="EnsemblBacteria" id="CAC98944">
    <property type="protein sequence ID" value="CAC98944"/>
    <property type="gene ID" value="CAC98944"/>
</dbReference>
<dbReference type="GeneID" id="984613"/>
<dbReference type="KEGG" id="lmo:lmo0866"/>
<dbReference type="PATRIC" id="fig|169963.11.peg.890"/>
<dbReference type="eggNOG" id="COG0513">
    <property type="taxonomic scope" value="Bacteria"/>
</dbReference>
<dbReference type="HOGENOM" id="CLU_003041_21_1_9"/>
<dbReference type="OrthoDB" id="9805696at2"/>
<dbReference type="PhylomeDB" id="Q8Y8N0"/>
<dbReference type="BioCyc" id="LMON169963:LMO0866-MONOMER"/>
<dbReference type="PHI-base" id="PHI:6510"/>
<dbReference type="PHI-base" id="PHI:7620"/>
<dbReference type="Proteomes" id="UP000000817">
    <property type="component" value="Chromosome"/>
</dbReference>
<dbReference type="GO" id="GO:0005829">
    <property type="term" value="C:cytosol"/>
    <property type="evidence" value="ECO:0000318"/>
    <property type="project" value="GO_Central"/>
</dbReference>
<dbReference type="GO" id="GO:0005524">
    <property type="term" value="F:ATP binding"/>
    <property type="evidence" value="ECO:0007669"/>
    <property type="project" value="UniProtKB-UniRule"/>
</dbReference>
<dbReference type="GO" id="GO:0016887">
    <property type="term" value="F:ATP hydrolysis activity"/>
    <property type="evidence" value="ECO:0007669"/>
    <property type="project" value="RHEA"/>
</dbReference>
<dbReference type="GO" id="GO:0003724">
    <property type="term" value="F:RNA helicase activity"/>
    <property type="evidence" value="ECO:0000318"/>
    <property type="project" value="GO_Central"/>
</dbReference>
<dbReference type="GO" id="GO:0033592">
    <property type="term" value="F:RNA strand annealing activity"/>
    <property type="evidence" value="ECO:0000318"/>
    <property type="project" value="GO_Central"/>
</dbReference>
<dbReference type="GO" id="GO:0009409">
    <property type="term" value="P:response to cold"/>
    <property type="evidence" value="ECO:0000318"/>
    <property type="project" value="GO_Central"/>
</dbReference>
<dbReference type="GO" id="GO:0006401">
    <property type="term" value="P:RNA catabolic process"/>
    <property type="evidence" value="ECO:0007669"/>
    <property type="project" value="UniProtKB-UniRule"/>
</dbReference>
<dbReference type="CDD" id="cd00268">
    <property type="entry name" value="DEADc"/>
    <property type="match status" value="1"/>
</dbReference>
<dbReference type="CDD" id="cd18787">
    <property type="entry name" value="SF2_C_DEAD"/>
    <property type="match status" value="1"/>
</dbReference>
<dbReference type="FunFam" id="3.40.50.300:FF:000108">
    <property type="entry name" value="ATP-dependent RNA helicase RhlE"/>
    <property type="match status" value="1"/>
</dbReference>
<dbReference type="FunFam" id="3.40.50.300:FF:000783">
    <property type="entry name" value="DEAD-box ATP-dependent RNA helicase CshA"/>
    <property type="match status" value="1"/>
</dbReference>
<dbReference type="Gene3D" id="3.40.50.300">
    <property type="entry name" value="P-loop containing nucleotide triphosphate hydrolases"/>
    <property type="match status" value="2"/>
</dbReference>
<dbReference type="HAMAP" id="MF_01493">
    <property type="entry name" value="DEAD_helicase_CshA"/>
    <property type="match status" value="1"/>
</dbReference>
<dbReference type="InterPro" id="IPR011545">
    <property type="entry name" value="DEAD/DEAH_box_helicase_dom"/>
</dbReference>
<dbReference type="InterPro" id="IPR050547">
    <property type="entry name" value="DEAD_box_RNA_helicases"/>
</dbReference>
<dbReference type="InterPro" id="IPR030880">
    <property type="entry name" value="DEAD_helicase_CshA"/>
</dbReference>
<dbReference type="InterPro" id="IPR014001">
    <property type="entry name" value="Helicase_ATP-bd"/>
</dbReference>
<dbReference type="InterPro" id="IPR001650">
    <property type="entry name" value="Helicase_C-like"/>
</dbReference>
<dbReference type="InterPro" id="IPR027417">
    <property type="entry name" value="P-loop_NTPase"/>
</dbReference>
<dbReference type="InterPro" id="IPR000629">
    <property type="entry name" value="RNA-helicase_DEAD-box_CS"/>
</dbReference>
<dbReference type="InterPro" id="IPR014014">
    <property type="entry name" value="RNA_helicase_DEAD_Q_motif"/>
</dbReference>
<dbReference type="PANTHER" id="PTHR47963">
    <property type="entry name" value="DEAD-BOX ATP-DEPENDENT RNA HELICASE 47, MITOCHONDRIAL"/>
    <property type="match status" value="1"/>
</dbReference>
<dbReference type="PANTHER" id="PTHR47963:SF5">
    <property type="entry name" value="DEAD-BOX ATP-DEPENDENT RNA HELICASE CSHA"/>
    <property type="match status" value="1"/>
</dbReference>
<dbReference type="Pfam" id="PF00270">
    <property type="entry name" value="DEAD"/>
    <property type="match status" value="1"/>
</dbReference>
<dbReference type="Pfam" id="PF25399">
    <property type="entry name" value="DeaD_dimer"/>
    <property type="match status" value="1"/>
</dbReference>
<dbReference type="Pfam" id="PF00271">
    <property type="entry name" value="Helicase_C"/>
    <property type="match status" value="1"/>
</dbReference>
<dbReference type="SMART" id="SM00487">
    <property type="entry name" value="DEXDc"/>
    <property type="match status" value="1"/>
</dbReference>
<dbReference type="SMART" id="SM00490">
    <property type="entry name" value="HELICc"/>
    <property type="match status" value="1"/>
</dbReference>
<dbReference type="SUPFAM" id="SSF52540">
    <property type="entry name" value="P-loop containing nucleoside triphosphate hydrolases"/>
    <property type="match status" value="1"/>
</dbReference>
<dbReference type="PROSITE" id="PS00039">
    <property type="entry name" value="DEAD_ATP_HELICASE"/>
    <property type="match status" value="1"/>
</dbReference>
<dbReference type="PROSITE" id="PS51192">
    <property type="entry name" value="HELICASE_ATP_BIND_1"/>
    <property type="match status" value="1"/>
</dbReference>
<dbReference type="PROSITE" id="PS51194">
    <property type="entry name" value="HELICASE_CTER"/>
    <property type="match status" value="1"/>
</dbReference>
<dbReference type="PROSITE" id="PS51195">
    <property type="entry name" value="Q_MOTIF"/>
    <property type="match status" value="1"/>
</dbReference>
<sequence length="520" mass="57309">MTKFSEFGLDEKIVKSVNRMGFEEATPIQEKTIPLGLEGKDLIGQAQTGTGKTAAFGLPMIHKIDQKSNNVQALIIAPTRELAIQVSEELYKLSYDKHVRVLAVYGGSDISRQIRSLKKNPQIVVGTPGRILDHINRRTLKLDHVETLVLDEADEMLNMGFIDDIETILKEVPAERQTLLFSATMPDPIRRIGERFMHSPELIRIKAKEMTALLIEQFFVKVHEKEKFDVLSRLLDVQAPELAIVFGRTKRRVDELSRALDMRGYVAEGIHGDLTQAKRMSVLRKFKEGKIDVLVATDVAARGLDISGVTHVYNYDIPQDPESYVHRIGRTGRAGKEGMAITFVQPREMGYLRIVEETTKKRMQPLQAPTWDEAFAGQLRVATEKIQEAITEENLADYKTFANELLEKYDATDIAAAMLKMLAKEPDKTPVHITEERPLPSRGGGGYKGKNGKGGKGGGYRGGSGKGGSYRDRNNSGKGRRSGGGSGGGSGSGGGGNRDRRGGGEQRSGGNKGNYSQKSK</sequence>
<name>CSHA_LISMO</name>
<gene>
    <name evidence="1" type="primary">cshA</name>
    <name type="ordered locus">lmo0866</name>
</gene>
<evidence type="ECO:0000255" key="1">
    <source>
        <dbReference type="HAMAP-Rule" id="MF_01493"/>
    </source>
</evidence>
<evidence type="ECO:0000256" key="2">
    <source>
        <dbReference type="SAM" id="MobiDB-lite"/>
    </source>
</evidence>
<evidence type="ECO:0000269" key="3">
    <source>
    </source>
</evidence>
<evidence type="ECO:0000269" key="4">
    <source>
    </source>
</evidence>
<comment type="function">
    <text evidence="1 3 4">DEAD-box RNA helicase possibly involved in RNA degradation. Unwinds dsRNA in both 5'- and 3'-directions, has RNA-dependent ATPase activity (By similarity). Involved in cold tolerance, motility and alcohol tolerance.</text>
</comment>
<comment type="catalytic activity">
    <reaction evidence="1">
        <text>ATP + H2O = ADP + phosphate + H(+)</text>
        <dbReference type="Rhea" id="RHEA:13065"/>
        <dbReference type="ChEBI" id="CHEBI:15377"/>
        <dbReference type="ChEBI" id="CHEBI:15378"/>
        <dbReference type="ChEBI" id="CHEBI:30616"/>
        <dbReference type="ChEBI" id="CHEBI:43474"/>
        <dbReference type="ChEBI" id="CHEBI:456216"/>
        <dbReference type="EC" id="3.6.4.13"/>
    </reaction>
</comment>
<comment type="subunit">
    <text evidence="1">Oligomerizes, may be a member of the RNA degradosome.</text>
</comment>
<comment type="subcellular location">
    <subcellularLocation>
        <location evidence="1">Cytoplasm</location>
    </subcellularLocation>
</comment>
<comment type="induction">
    <text evidence="3 4">By growth at 3 degrees Celsius (PubMed:22564273), repressed by 6% NaCl (PubMed:22820328).</text>
</comment>
<comment type="disruption phenotype">
    <text evidence="3 4">Growth rate decreased at 37 and 25 degrees Celsius, completely stopped at 3 degrees Celsius. No motility at 25 or 3 degrees Celsius (PubMed:22564273). Decreased growth in the presence of ethanol (PubMed:22820328).</text>
</comment>
<comment type="similarity">
    <text evidence="1">Belongs to the DEAD box helicase family. CshA subfamily.</text>
</comment>
<feature type="chain" id="PRO_0000430102" description="ATP-dependent RNA helicase CshA">
    <location>
        <begin position="1"/>
        <end position="520"/>
    </location>
</feature>
<feature type="domain" description="Helicase ATP-binding" evidence="1">
    <location>
        <begin position="33"/>
        <end position="203"/>
    </location>
</feature>
<feature type="domain" description="Helicase C-terminal" evidence="1">
    <location>
        <begin position="214"/>
        <end position="374"/>
    </location>
</feature>
<feature type="region of interest" description="Disordered" evidence="2">
    <location>
        <begin position="428"/>
        <end position="520"/>
    </location>
</feature>
<feature type="short sequence motif" description="Q motif">
    <location>
        <begin position="2"/>
        <end position="30"/>
    </location>
</feature>
<feature type="short sequence motif" description="DEAD box">
    <location>
        <begin position="151"/>
        <end position="154"/>
    </location>
</feature>
<feature type="compositionally biased region" description="Basic and acidic residues" evidence="2">
    <location>
        <begin position="428"/>
        <end position="439"/>
    </location>
</feature>
<feature type="compositionally biased region" description="Gly residues" evidence="2">
    <location>
        <begin position="442"/>
        <end position="468"/>
    </location>
</feature>
<feature type="compositionally biased region" description="Gly residues" evidence="2">
    <location>
        <begin position="482"/>
        <end position="496"/>
    </location>
</feature>
<feature type="binding site" evidence="1">
    <location>
        <begin position="46"/>
        <end position="53"/>
    </location>
    <ligand>
        <name>ATP</name>
        <dbReference type="ChEBI" id="CHEBI:30616"/>
    </ligand>
</feature>